<organism>
    <name type="scientific">Danio rerio</name>
    <name type="common">Zebrafish</name>
    <name type="synonym">Brachydanio rerio</name>
    <dbReference type="NCBI Taxonomy" id="7955"/>
    <lineage>
        <taxon>Eukaryota</taxon>
        <taxon>Metazoa</taxon>
        <taxon>Chordata</taxon>
        <taxon>Craniata</taxon>
        <taxon>Vertebrata</taxon>
        <taxon>Euteleostomi</taxon>
        <taxon>Actinopterygii</taxon>
        <taxon>Neopterygii</taxon>
        <taxon>Teleostei</taxon>
        <taxon>Ostariophysi</taxon>
        <taxon>Cypriniformes</taxon>
        <taxon>Danionidae</taxon>
        <taxon>Danioninae</taxon>
        <taxon>Danio</taxon>
    </lineage>
</organism>
<comment type="function">
    <text evidence="3">Catalyzes the reversible synthesis of acetylcholine (ACh) from acetyl CoA and choline at cholinergic synapses.</text>
</comment>
<comment type="catalytic activity">
    <reaction>
        <text>choline + acetyl-CoA = acetylcholine + CoA</text>
        <dbReference type="Rhea" id="RHEA:18821"/>
        <dbReference type="ChEBI" id="CHEBI:15354"/>
        <dbReference type="ChEBI" id="CHEBI:15355"/>
        <dbReference type="ChEBI" id="CHEBI:57287"/>
        <dbReference type="ChEBI" id="CHEBI:57288"/>
        <dbReference type="EC" id="2.3.1.6"/>
    </reaction>
</comment>
<comment type="similarity">
    <text evidence="4">Belongs to the carnitine/choline acetyltransferase family.</text>
</comment>
<feature type="chain" id="PRO_0000351550" description="Choline O-acetyltransferase">
    <location>
        <begin position="1"/>
        <end position="637"/>
    </location>
</feature>
<feature type="region of interest" description="Disordered" evidence="2">
    <location>
        <begin position="1"/>
        <end position="20"/>
    </location>
</feature>
<feature type="compositionally biased region" description="Basic and acidic residues" evidence="2">
    <location>
        <begin position="1"/>
        <end position="13"/>
    </location>
</feature>
<feature type="active site" description="Proton acceptor" evidence="1">
    <location>
        <position position="329"/>
    </location>
</feature>
<feature type="binding site" evidence="1">
    <location>
        <begin position="407"/>
        <end position="419"/>
    </location>
    <ligand>
        <name>CoA</name>
        <dbReference type="ChEBI" id="CHEBI:57287"/>
    </ligand>
</feature>
<feature type="binding site" evidence="1">
    <location>
        <position position="445"/>
    </location>
    <ligand>
        <name>CoA</name>
        <dbReference type="ChEBI" id="CHEBI:57287"/>
    </ligand>
</feature>
<feature type="binding site" evidence="1">
    <location>
        <position position="545"/>
    </location>
    <ligand>
        <name>CoA</name>
        <dbReference type="ChEBI" id="CHEBI:57287"/>
    </ligand>
</feature>
<sequence>MPVSKREQSKDTGDPCALPKLPIPPLKQTLDMYLTCMGHLVPEDQFRKTKAVVEKFGAPGGVGETLQKKLLERSEQKANWVYDYWLEDMYLNNRLALPVNSSPVMVFHKQNFKGQSDVLRFAANLISGVLEYKALIDGRALPVEHARGQLAGTPLCMDQYNKVFTSYRLPGTKTDTLVAQKSTVMPEPEHIIVACKNQFFVLDVMVNFRRLNEKDLYTQLERIRKMADIEEERQPPIGLLTSDGRTQWAEARNILIKDSTNRDSLDMIERCLCLVCLDEETATELNDSNRALLMLHGGGTDKNGGNRWYDKPMQFVIGADGCCGVVCEHSPFEGIVLVQCSEYLLRYMRGSPSKLVRAASMSELPAPRRLRWKCSPDIQTFLSASADRLQKLVKNLDMNVHKFTGYGKEFIKRQKMSPDAYVQVALQFTFYRCHGRLVPTYESASIRRFQEGRVDNIRSSTPEALAFVKAMASGSKITDAEKMELLWTAIKAQTNYTILAITGMAIDNHLLGLREIAKELKLEKPELFSDTTYATSIHFTLSTSQVPTTEEMFCCYGPVVPNGYGACYNPQTDHILFCVSSFRECAETSSDLFVKTLEGCLKEMQDLCRKCNTEVKPADSTQRMEGNPKVMKNGSKS</sequence>
<accession>B2ZGJ1</accession>
<proteinExistence type="evidence at transcript level"/>
<dbReference type="EC" id="2.3.1.6"/>
<dbReference type="EMBL" id="EU660883">
    <property type="protein sequence ID" value="ACD40042.1"/>
    <property type="molecule type" value="mRNA"/>
</dbReference>
<dbReference type="RefSeq" id="NP_001124191.1">
    <property type="nucleotide sequence ID" value="NM_001130719.1"/>
</dbReference>
<dbReference type="RefSeq" id="XP_005156786.1">
    <property type="nucleotide sequence ID" value="XM_005156729.3"/>
</dbReference>
<dbReference type="SMR" id="B2ZGJ1"/>
<dbReference type="FunCoup" id="B2ZGJ1">
    <property type="interactions" value="1741"/>
</dbReference>
<dbReference type="STRING" id="7955.ENSDARP00000025508"/>
<dbReference type="PaxDb" id="7955-ENSDARP00000125038"/>
<dbReference type="Ensembl" id="ENSDART00000024225">
    <property type="protein sequence ID" value="ENSDARP00000025508"/>
    <property type="gene ID" value="ENSDARG00000015854"/>
</dbReference>
<dbReference type="Ensembl" id="ENSDART00000150228">
    <property type="protein sequence ID" value="ENSDARP00000125038"/>
    <property type="gene ID" value="ENSDARG00000015854"/>
</dbReference>
<dbReference type="GeneID" id="100170938"/>
<dbReference type="KEGG" id="dre:100170938"/>
<dbReference type="AGR" id="ZFIN:ZDB-GENE-080102-2"/>
<dbReference type="CTD" id="100170938"/>
<dbReference type="ZFIN" id="ZDB-GENE-080102-2">
    <property type="gene designation" value="chata"/>
</dbReference>
<dbReference type="eggNOG" id="KOG3717">
    <property type="taxonomic scope" value="Eukaryota"/>
</dbReference>
<dbReference type="HOGENOM" id="CLU_013513_3_0_1"/>
<dbReference type="InParanoid" id="B2ZGJ1"/>
<dbReference type="OMA" id="FIKQQKC"/>
<dbReference type="OrthoDB" id="240216at2759"/>
<dbReference type="PhylomeDB" id="B2ZGJ1"/>
<dbReference type="TreeFam" id="TF313836"/>
<dbReference type="BRENDA" id="2.3.1.6">
    <property type="organism ID" value="928"/>
</dbReference>
<dbReference type="Reactome" id="R-DRE-1483191">
    <property type="pathway name" value="Synthesis of PC"/>
</dbReference>
<dbReference type="Reactome" id="R-DRE-264642">
    <property type="pathway name" value="Acetylcholine Neurotransmitter Release Cycle"/>
</dbReference>
<dbReference type="PRO" id="PR:B2ZGJ1"/>
<dbReference type="Proteomes" id="UP000000437">
    <property type="component" value="Chromosome 13"/>
</dbReference>
<dbReference type="Bgee" id="ENSDARG00000015854">
    <property type="expression patterns" value="Expressed in retina and 19 other cell types or tissues"/>
</dbReference>
<dbReference type="ExpressionAtlas" id="B2ZGJ1">
    <property type="expression patterns" value="baseline"/>
</dbReference>
<dbReference type="GO" id="GO:0005737">
    <property type="term" value="C:cytoplasm"/>
    <property type="evidence" value="ECO:0000318"/>
    <property type="project" value="GO_Central"/>
</dbReference>
<dbReference type="GO" id="GO:0043005">
    <property type="term" value="C:neuron projection"/>
    <property type="evidence" value="ECO:0000318"/>
    <property type="project" value="GO_Central"/>
</dbReference>
<dbReference type="GO" id="GO:0045202">
    <property type="term" value="C:synapse"/>
    <property type="evidence" value="ECO:0007669"/>
    <property type="project" value="GOC"/>
</dbReference>
<dbReference type="GO" id="GO:0004102">
    <property type="term" value="F:choline O-acetyltransferase activity"/>
    <property type="evidence" value="ECO:0000318"/>
    <property type="project" value="GO_Central"/>
</dbReference>
<dbReference type="GO" id="GO:0008292">
    <property type="term" value="P:acetylcholine biosynthetic process"/>
    <property type="evidence" value="ECO:0000318"/>
    <property type="project" value="GO_Central"/>
</dbReference>
<dbReference type="GO" id="GO:0007626">
    <property type="term" value="P:locomotory behavior"/>
    <property type="evidence" value="ECO:0000315"/>
    <property type="project" value="UniProtKB"/>
</dbReference>
<dbReference type="GO" id="GO:0007274">
    <property type="term" value="P:neuromuscular synaptic transmission"/>
    <property type="evidence" value="ECO:0000318"/>
    <property type="project" value="GO_Central"/>
</dbReference>
<dbReference type="FunFam" id="3.30.559.10:FF:000001">
    <property type="entry name" value="Carnitine O-acetyltransferase"/>
    <property type="match status" value="1"/>
</dbReference>
<dbReference type="FunFam" id="3.30.559.70:FF:000004">
    <property type="entry name" value="Choline O-acetyltransferase"/>
    <property type="match status" value="1"/>
</dbReference>
<dbReference type="Gene3D" id="3.30.559.10">
    <property type="entry name" value="Chloramphenicol acetyltransferase-like domain"/>
    <property type="match status" value="1"/>
</dbReference>
<dbReference type="Gene3D" id="3.30.559.70">
    <property type="entry name" value="Choline/Carnitine o-acyltransferase, domain 2"/>
    <property type="match status" value="1"/>
</dbReference>
<dbReference type="InterPro" id="IPR000542">
    <property type="entry name" value="Carn_acyl_trans"/>
</dbReference>
<dbReference type="InterPro" id="IPR023213">
    <property type="entry name" value="CAT-like_dom_sf"/>
</dbReference>
<dbReference type="InterPro" id="IPR039551">
    <property type="entry name" value="Cho/carn_acyl_trans"/>
</dbReference>
<dbReference type="InterPro" id="IPR042231">
    <property type="entry name" value="Cho/carn_acyl_trans_2"/>
</dbReference>
<dbReference type="PANTHER" id="PTHR22589">
    <property type="entry name" value="CARNITINE O-ACYLTRANSFERASE"/>
    <property type="match status" value="1"/>
</dbReference>
<dbReference type="PANTHER" id="PTHR22589:SF14">
    <property type="entry name" value="CHOLINE O-ACETYLTRANSFERASE"/>
    <property type="match status" value="1"/>
</dbReference>
<dbReference type="Pfam" id="PF00755">
    <property type="entry name" value="Carn_acyltransf"/>
    <property type="match status" value="1"/>
</dbReference>
<dbReference type="SUPFAM" id="SSF52777">
    <property type="entry name" value="CoA-dependent acyltransferases"/>
    <property type="match status" value="2"/>
</dbReference>
<dbReference type="PROSITE" id="PS00439">
    <property type="entry name" value="ACYLTRANSF_C_1"/>
    <property type="match status" value="1"/>
</dbReference>
<dbReference type="PROSITE" id="PS00440">
    <property type="entry name" value="ACYLTRANSF_C_2"/>
    <property type="match status" value="1"/>
</dbReference>
<keyword id="KW-0012">Acyltransferase</keyword>
<keyword id="KW-0530">Neurotransmitter biosynthesis</keyword>
<keyword id="KW-1185">Reference proteome</keyword>
<keyword id="KW-0808">Transferase</keyword>
<evidence type="ECO:0000250" key="1"/>
<evidence type="ECO:0000256" key="2">
    <source>
        <dbReference type="SAM" id="MobiDB-lite"/>
    </source>
</evidence>
<evidence type="ECO:0000269" key="3">
    <source>
    </source>
</evidence>
<evidence type="ECO:0000305" key="4"/>
<gene>
    <name type="primary">chat</name>
</gene>
<reference key="1">
    <citation type="journal article" date="2008" name="J. Neurophysiol.">
        <title>Function of neuromuscular synapses in the zebrafish choline-acetyltransferase mutant bajan.</title>
        <authorList>
            <person name="Wang M."/>
            <person name="Wen H."/>
            <person name="Brehm P."/>
        </authorList>
    </citation>
    <scope>NUCLEOTIDE SEQUENCE [MRNA]</scope>
    <scope>FUNCTION</scope>
</reference>
<name>CLAT_DANRE</name>
<protein>
    <recommendedName>
        <fullName>Choline O-acetyltransferase</fullName>
        <shortName>CHOACTase</shortName>
        <shortName>ChAT</shortName>
        <shortName>Choline acetylase</shortName>
        <ecNumber>2.3.1.6</ecNumber>
    </recommendedName>
</protein>